<evidence type="ECO:0000255" key="1">
    <source>
        <dbReference type="HAMAP-Rule" id="MF_00685"/>
    </source>
</evidence>
<proteinExistence type="inferred from homology"/>
<dbReference type="EC" id="2.4.1.18" evidence="1"/>
<dbReference type="EMBL" id="CP000243">
    <property type="protein sequence ID" value="ABE09370.1"/>
    <property type="molecule type" value="Genomic_DNA"/>
</dbReference>
<dbReference type="RefSeq" id="WP_001283713.1">
    <property type="nucleotide sequence ID" value="NZ_CP064825.1"/>
</dbReference>
<dbReference type="SMR" id="Q1R5J4"/>
<dbReference type="CAZy" id="CBM48">
    <property type="family name" value="Carbohydrate-Binding Module Family 48"/>
</dbReference>
<dbReference type="CAZy" id="GH13">
    <property type="family name" value="Glycoside Hydrolase Family 13"/>
</dbReference>
<dbReference type="KEGG" id="eci:UTI89_C3941"/>
<dbReference type="HOGENOM" id="CLU_004245_3_2_6"/>
<dbReference type="UniPathway" id="UPA00164"/>
<dbReference type="Proteomes" id="UP000001952">
    <property type="component" value="Chromosome"/>
</dbReference>
<dbReference type="GO" id="GO:0005829">
    <property type="term" value="C:cytosol"/>
    <property type="evidence" value="ECO:0007669"/>
    <property type="project" value="TreeGrafter"/>
</dbReference>
<dbReference type="GO" id="GO:0003844">
    <property type="term" value="F:1,4-alpha-glucan branching enzyme activity"/>
    <property type="evidence" value="ECO:0007669"/>
    <property type="project" value="UniProtKB-UniRule"/>
</dbReference>
<dbReference type="GO" id="GO:0043169">
    <property type="term" value="F:cation binding"/>
    <property type="evidence" value="ECO:0007669"/>
    <property type="project" value="InterPro"/>
</dbReference>
<dbReference type="GO" id="GO:0004553">
    <property type="term" value="F:hydrolase activity, hydrolyzing O-glycosyl compounds"/>
    <property type="evidence" value="ECO:0007669"/>
    <property type="project" value="InterPro"/>
</dbReference>
<dbReference type="GO" id="GO:0005978">
    <property type="term" value="P:glycogen biosynthetic process"/>
    <property type="evidence" value="ECO:0007669"/>
    <property type="project" value="UniProtKB-UniRule"/>
</dbReference>
<dbReference type="CDD" id="cd11322">
    <property type="entry name" value="AmyAc_Glg_BE"/>
    <property type="match status" value="1"/>
</dbReference>
<dbReference type="CDD" id="cd02855">
    <property type="entry name" value="E_set_GBE_prok_N"/>
    <property type="match status" value="1"/>
</dbReference>
<dbReference type="FunFam" id="2.60.40.10:FF:000169">
    <property type="entry name" value="1,4-alpha-glucan branching enzyme GlgB"/>
    <property type="match status" value="1"/>
</dbReference>
<dbReference type="FunFam" id="2.60.40.10:FF:000331">
    <property type="entry name" value="1,4-alpha-glucan branching enzyme GlgB"/>
    <property type="match status" value="1"/>
</dbReference>
<dbReference type="FunFam" id="2.60.40.1180:FF:000002">
    <property type="entry name" value="1,4-alpha-glucan branching enzyme GlgB"/>
    <property type="match status" value="1"/>
</dbReference>
<dbReference type="FunFam" id="3.20.20.80:FF:000003">
    <property type="entry name" value="1,4-alpha-glucan branching enzyme GlgB"/>
    <property type="match status" value="1"/>
</dbReference>
<dbReference type="Gene3D" id="3.20.20.80">
    <property type="entry name" value="Glycosidases"/>
    <property type="match status" value="1"/>
</dbReference>
<dbReference type="Gene3D" id="2.60.40.1180">
    <property type="entry name" value="Golgi alpha-mannosidase II"/>
    <property type="match status" value="1"/>
</dbReference>
<dbReference type="Gene3D" id="2.60.40.10">
    <property type="entry name" value="Immunoglobulins"/>
    <property type="match status" value="2"/>
</dbReference>
<dbReference type="HAMAP" id="MF_00685">
    <property type="entry name" value="GlgB"/>
    <property type="match status" value="1"/>
</dbReference>
<dbReference type="InterPro" id="IPR006048">
    <property type="entry name" value="A-amylase/branching_C"/>
</dbReference>
<dbReference type="InterPro" id="IPR037439">
    <property type="entry name" value="Branching_enzy"/>
</dbReference>
<dbReference type="InterPro" id="IPR006407">
    <property type="entry name" value="GlgB"/>
</dbReference>
<dbReference type="InterPro" id="IPR054169">
    <property type="entry name" value="GlgB_N"/>
</dbReference>
<dbReference type="InterPro" id="IPR044143">
    <property type="entry name" value="GlgB_N_E_set_prok"/>
</dbReference>
<dbReference type="InterPro" id="IPR006047">
    <property type="entry name" value="Glyco_hydro_13_cat_dom"/>
</dbReference>
<dbReference type="InterPro" id="IPR004193">
    <property type="entry name" value="Glyco_hydro_13_N"/>
</dbReference>
<dbReference type="InterPro" id="IPR013780">
    <property type="entry name" value="Glyco_hydro_b"/>
</dbReference>
<dbReference type="InterPro" id="IPR017853">
    <property type="entry name" value="Glycoside_hydrolase_SF"/>
</dbReference>
<dbReference type="InterPro" id="IPR013783">
    <property type="entry name" value="Ig-like_fold"/>
</dbReference>
<dbReference type="InterPro" id="IPR014756">
    <property type="entry name" value="Ig_E-set"/>
</dbReference>
<dbReference type="NCBIfam" id="TIGR01515">
    <property type="entry name" value="branching_enzym"/>
    <property type="match status" value="1"/>
</dbReference>
<dbReference type="NCBIfam" id="NF003811">
    <property type="entry name" value="PRK05402.1"/>
    <property type="match status" value="1"/>
</dbReference>
<dbReference type="NCBIfam" id="NF008967">
    <property type="entry name" value="PRK12313.1"/>
    <property type="match status" value="1"/>
</dbReference>
<dbReference type="PANTHER" id="PTHR43651">
    <property type="entry name" value="1,4-ALPHA-GLUCAN-BRANCHING ENZYME"/>
    <property type="match status" value="1"/>
</dbReference>
<dbReference type="PANTHER" id="PTHR43651:SF3">
    <property type="entry name" value="1,4-ALPHA-GLUCAN-BRANCHING ENZYME"/>
    <property type="match status" value="1"/>
</dbReference>
<dbReference type="Pfam" id="PF00128">
    <property type="entry name" value="Alpha-amylase"/>
    <property type="match status" value="1"/>
</dbReference>
<dbReference type="Pfam" id="PF02806">
    <property type="entry name" value="Alpha-amylase_C"/>
    <property type="match status" value="1"/>
</dbReference>
<dbReference type="Pfam" id="PF02922">
    <property type="entry name" value="CBM_48"/>
    <property type="match status" value="1"/>
</dbReference>
<dbReference type="Pfam" id="PF22019">
    <property type="entry name" value="GlgB_N"/>
    <property type="match status" value="1"/>
</dbReference>
<dbReference type="PIRSF" id="PIRSF000463">
    <property type="entry name" value="GlgB"/>
    <property type="match status" value="1"/>
</dbReference>
<dbReference type="SMART" id="SM00642">
    <property type="entry name" value="Aamy"/>
    <property type="match status" value="1"/>
</dbReference>
<dbReference type="SUPFAM" id="SSF51445">
    <property type="entry name" value="(Trans)glycosidases"/>
    <property type="match status" value="1"/>
</dbReference>
<dbReference type="SUPFAM" id="SSF81296">
    <property type="entry name" value="E set domains"/>
    <property type="match status" value="2"/>
</dbReference>
<dbReference type="SUPFAM" id="SSF51011">
    <property type="entry name" value="Glycosyl hydrolase domain"/>
    <property type="match status" value="1"/>
</dbReference>
<gene>
    <name evidence="1" type="primary">glgB</name>
    <name type="ordered locus">UTI89_C3941</name>
</gene>
<comment type="function">
    <text evidence="1">Catalyzes the formation of the alpha-1,6-glucosidic linkages in glycogen by scission of a 1,4-alpha-linked oligosaccharide from growing alpha-1,4-glucan chains and the subsequent attachment of the oligosaccharide to the alpha-1,6 position.</text>
</comment>
<comment type="catalytic activity">
    <reaction evidence="1">
        <text>Transfers a segment of a (1-&gt;4)-alpha-D-glucan chain to a primary hydroxy group in a similar glucan chain.</text>
        <dbReference type="EC" id="2.4.1.18"/>
    </reaction>
</comment>
<comment type="pathway">
    <text evidence="1">Glycan biosynthesis; glycogen biosynthesis.</text>
</comment>
<comment type="subunit">
    <text evidence="1">Monomer.</text>
</comment>
<comment type="similarity">
    <text evidence="1">Belongs to the glycosyl hydrolase 13 family. GlgB subfamily.</text>
</comment>
<name>GLGB_ECOUT</name>
<sequence>MSDRIDRDVINALIAGHFADPFSVLGMHKTTAGLEVRALLPDATDVWVIEPKTGRKLAKLECLDSRGFFSGVIPRRKNFFRYQLAVVWHGQQNLIDDPYRFGPLIQEMDAWLLSEGTHLRPYETLGAHADTMDGVTGTRFSVWAPNARRVSVVGQFNYWDGRRHPMRLRKESGIWELFIPGAHNGQLYKYEMIDANGNLRLKSDPYAFEAQMRPETASLICGLPEKVVQTEERKKANQFDAPISIYEVHLGSWRRHTDNNFWLSYRELADQLVPYAKWMGFTHLELLPINEHPFDGSWGYQPTGLYAPTRRFGTRDDFRYFIDAAHAAGLNVILDWVPGHFPTDDFALAEFDGTNLYEHSDPREGYHQDWNTLIYNYGRREVSNFLVGNALYWIERFGIDALRVDAVASMIYRDYSRKEGEWIPNEFGGRENLEAIEFLRNTNRILGEQVSGAVTMAEESTDFPGVSRPQDMGGLGFWYKWNLGWMHDTLDYMKLDPIYRQYHHDKLTFGMLYNYTENFVLPLSHDEVVHGKKSILDRMPGDAWQKFANLRAYYGWMWAFPGKKLLFMGNEFAQGREWNHDASLDWHLLEGGDNWHHGVQRLVRDLNHTYRHHKAMHELDFDPYGFEWLVVDDKERSVLIFVRRDKEGNEIIVASNFTPVPRHDYRFGINQPGKWREILNTDSMHYHGSNAGNGGAVHSDEIASHGRQHSLSLTLPPLATIWLVREAE</sequence>
<reference key="1">
    <citation type="journal article" date="2006" name="Proc. Natl. Acad. Sci. U.S.A.">
        <title>Identification of genes subject to positive selection in uropathogenic strains of Escherichia coli: a comparative genomics approach.</title>
        <authorList>
            <person name="Chen S.L."/>
            <person name="Hung C.-S."/>
            <person name="Xu J."/>
            <person name="Reigstad C.S."/>
            <person name="Magrini V."/>
            <person name="Sabo A."/>
            <person name="Blasiar D."/>
            <person name="Bieri T."/>
            <person name="Meyer R.R."/>
            <person name="Ozersky P."/>
            <person name="Armstrong J.R."/>
            <person name="Fulton R.S."/>
            <person name="Latreille J.P."/>
            <person name="Spieth J."/>
            <person name="Hooton T.M."/>
            <person name="Mardis E.R."/>
            <person name="Hultgren S.J."/>
            <person name="Gordon J.I."/>
        </authorList>
    </citation>
    <scope>NUCLEOTIDE SEQUENCE [LARGE SCALE GENOMIC DNA]</scope>
    <source>
        <strain>UTI89 / UPEC</strain>
    </source>
</reference>
<feature type="chain" id="PRO_0000260653" description="1,4-alpha-glucan branching enzyme GlgB">
    <location>
        <begin position="1"/>
        <end position="728"/>
    </location>
</feature>
<feature type="active site" description="Nucleophile" evidence="1">
    <location>
        <position position="405"/>
    </location>
</feature>
<feature type="active site" description="Proton donor" evidence="1">
    <location>
        <position position="458"/>
    </location>
</feature>
<accession>Q1R5J4</accession>
<protein>
    <recommendedName>
        <fullName evidence="1">1,4-alpha-glucan branching enzyme GlgB</fullName>
        <ecNumber evidence="1">2.4.1.18</ecNumber>
    </recommendedName>
    <alternativeName>
        <fullName evidence="1">1,4-alpha-D-glucan:1,4-alpha-D-glucan 6-glucosyl-transferase</fullName>
    </alternativeName>
    <alternativeName>
        <fullName evidence="1">Alpha-(1-&gt;4)-glucan branching enzyme</fullName>
    </alternativeName>
    <alternativeName>
        <fullName evidence="1">Glycogen branching enzyme</fullName>
        <shortName evidence="1">BE</shortName>
    </alternativeName>
</protein>
<keyword id="KW-0119">Carbohydrate metabolism</keyword>
<keyword id="KW-0320">Glycogen biosynthesis</keyword>
<keyword id="KW-0321">Glycogen metabolism</keyword>
<keyword id="KW-0328">Glycosyltransferase</keyword>
<keyword id="KW-0808">Transferase</keyword>
<organism>
    <name type="scientific">Escherichia coli (strain UTI89 / UPEC)</name>
    <dbReference type="NCBI Taxonomy" id="364106"/>
    <lineage>
        <taxon>Bacteria</taxon>
        <taxon>Pseudomonadati</taxon>
        <taxon>Pseudomonadota</taxon>
        <taxon>Gammaproteobacteria</taxon>
        <taxon>Enterobacterales</taxon>
        <taxon>Enterobacteriaceae</taxon>
        <taxon>Escherichia</taxon>
    </lineage>
</organism>